<organism>
    <name type="scientific">Daucus carota</name>
    <name type="common">Wild carrot</name>
    <dbReference type="NCBI Taxonomy" id="4039"/>
    <lineage>
        <taxon>Eukaryota</taxon>
        <taxon>Viridiplantae</taxon>
        <taxon>Streptophyta</taxon>
        <taxon>Embryophyta</taxon>
        <taxon>Tracheophyta</taxon>
        <taxon>Spermatophyta</taxon>
        <taxon>Magnoliopsida</taxon>
        <taxon>eudicotyledons</taxon>
        <taxon>Gunneridae</taxon>
        <taxon>Pentapetalae</taxon>
        <taxon>asterids</taxon>
        <taxon>campanulids</taxon>
        <taxon>Apiales</taxon>
        <taxon>Apiaceae</taxon>
        <taxon>Apioideae</taxon>
        <taxon>Scandiceae</taxon>
        <taxon>Daucinae</taxon>
        <taxon>Daucus</taxon>
        <taxon>Daucus sect. Daucus</taxon>
    </lineage>
</organism>
<feature type="chain" id="PRO_0000275728" description="Cytochrome b559 subunit beta">
    <location>
        <begin position="1"/>
        <end position="39"/>
    </location>
</feature>
<feature type="transmembrane region" description="Helical" evidence="1">
    <location>
        <begin position="14"/>
        <end position="30"/>
    </location>
</feature>
<feature type="binding site" description="axial binding residue" evidence="1">
    <location>
        <position position="18"/>
    </location>
    <ligand>
        <name>heme</name>
        <dbReference type="ChEBI" id="CHEBI:30413"/>
        <note>ligand shared with alpha subunit</note>
    </ligand>
    <ligandPart>
        <name>Fe</name>
        <dbReference type="ChEBI" id="CHEBI:18248"/>
    </ligandPart>
</feature>
<name>PSBF_DAUCA</name>
<geneLocation type="chloroplast"/>
<proteinExistence type="inferred from homology"/>
<sequence>MTIDRTYPIFTVRWLAVHGLAVPTVSFLGSISAMQFIQR</sequence>
<gene>
    <name evidence="1" type="primary">psbF</name>
</gene>
<comment type="function">
    <text evidence="1">This b-type cytochrome is tightly associated with the reaction center of photosystem II (PSII). PSII is a light-driven water:plastoquinone oxidoreductase that uses light energy to abstract electrons from H(2)O, generating O(2) and a proton gradient subsequently used for ATP formation. It consists of a core antenna complex that captures photons, and an electron transfer chain that converts photonic excitation into a charge separation.</text>
</comment>
<comment type="cofactor">
    <cofactor evidence="1">
        <name>heme b</name>
        <dbReference type="ChEBI" id="CHEBI:60344"/>
    </cofactor>
    <text evidence="1">With its partner (PsbE) binds heme. PSII binds additional chlorophylls, carotenoids and specific lipids.</text>
</comment>
<comment type="subunit">
    <text evidence="1">Heterodimer of an alpha subunit and a beta subunit. PSII is composed of 1 copy each of membrane proteins PsbA, PsbB, PsbC, PsbD, PsbE, PsbF, PsbH, PsbI, PsbJ, PsbK, PsbL, PsbM, PsbT, PsbX, PsbY, PsbZ, Psb30/Ycf12, at least 3 peripheral proteins of the oxygen-evolving complex and a large number of cofactors. It forms dimeric complexes.</text>
</comment>
<comment type="subcellular location">
    <subcellularLocation>
        <location evidence="1">Plastid</location>
        <location evidence="1">Chloroplast thylakoid membrane</location>
        <topology evidence="1">Single-pass membrane protein</topology>
    </subcellularLocation>
</comment>
<comment type="similarity">
    <text evidence="1">Belongs to the PsbE/PsbF family.</text>
</comment>
<evidence type="ECO:0000255" key="1">
    <source>
        <dbReference type="HAMAP-Rule" id="MF_00643"/>
    </source>
</evidence>
<protein>
    <recommendedName>
        <fullName evidence="1">Cytochrome b559 subunit beta</fullName>
    </recommendedName>
    <alternativeName>
        <fullName evidence="1">PSII reaction center subunit VI</fullName>
    </alternativeName>
</protein>
<reference key="1">
    <citation type="journal article" date="2006" name="BMC Genomics">
        <title>Complete plastid genome sequence of Daucus carota: implications for biotechnology and phylogeny of angiosperms.</title>
        <authorList>
            <person name="Ruhlman T."/>
            <person name="Lee S.-B."/>
            <person name="Jansen R.K."/>
            <person name="Hostetler J.B."/>
            <person name="Tallon L.J."/>
            <person name="Town C.D."/>
            <person name="Daniell H."/>
        </authorList>
    </citation>
    <scope>NUCLEOTIDE SEQUENCE [LARGE SCALE GENOMIC DNA]</scope>
    <source>
        <strain>cv. Danvers Half-long</strain>
    </source>
</reference>
<dbReference type="EMBL" id="DQ898156">
    <property type="protein sequence ID" value="ABI32440.1"/>
    <property type="molecule type" value="Genomic_DNA"/>
</dbReference>
<dbReference type="RefSeq" id="YP_740133.1">
    <property type="nucleotide sequence ID" value="NC_008325.1"/>
</dbReference>
<dbReference type="SMR" id="Q0G9U6"/>
<dbReference type="GeneID" id="4266759"/>
<dbReference type="GO" id="GO:0009535">
    <property type="term" value="C:chloroplast thylakoid membrane"/>
    <property type="evidence" value="ECO:0007669"/>
    <property type="project" value="UniProtKB-SubCell"/>
</dbReference>
<dbReference type="GO" id="GO:0009539">
    <property type="term" value="C:photosystem II reaction center"/>
    <property type="evidence" value="ECO:0007669"/>
    <property type="project" value="InterPro"/>
</dbReference>
<dbReference type="GO" id="GO:0009055">
    <property type="term" value="F:electron transfer activity"/>
    <property type="evidence" value="ECO:0007669"/>
    <property type="project" value="UniProtKB-UniRule"/>
</dbReference>
<dbReference type="GO" id="GO:0020037">
    <property type="term" value="F:heme binding"/>
    <property type="evidence" value="ECO:0007669"/>
    <property type="project" value="InterPro"/>
</dbReference>
<dbReference type="GO" id="GO:0005506">
    <property type="term" value="F:iron ion binding"/>
    <property type="evidence" value="ECO:0007669"/>
    <property type="project" value="UniProtKB-UniRule"/>
</dbReference>
<dbReference type="GO" id="GO:0009767">
    <property type="term" value="P:photosynthetic electron transport chain"/>
    <property type="evidence" value="ECO:0007669"/>
    <property type="project" value="InterPro"/>
</dbReference>
<dbReference type="HAMAP" id="MF_00643">
    <property type="entry name" value="PSII_PsbF"/>
    <property type="match status" value="1"/>
</dbReference>
<dbReference type="InterPro" id="IPR006241">
    <property type="entry name" value="PSII_cyt_b559_bsu"/>
</dbReference>
<dbReference type="InterPro" id="IPR006216">
    <property type="entry name" value="PSII_cyt_b559_CS"/>
</dbReference>
<dbReference type="InterPro" id="IPR013081">
    <property type="entry name" value="PSII_cyt_b559_N"/>
</dbReference>
<dbReference type="NCBIfam" id="TIGR01333">
    <property type="entry name" value="cyt_b559_beta"/>
    <property type="match status" value="1"/>
</dbReference>
<dbReference type="Pfam" id="PF00283">
    <property type="entry name" value="Cytochrom_B559"/>
    <property type="match status" value="1"/>
</dbReference>
<dbReference type="PIRSF" id="PIRSF000037">
    <property type="entry name" value="PsbF"/>
    <property type="match status" value="1"/>
</dbReference>
<dbReference type="SUPFAM" id="SSF161045">
    <property type="entry name" value="Cytochrome b559 subunits"/>
    <property type="match status" value="1"/>
</dbReference>
<dbReference type="PROSITE" id="PS00537">
    <property type="entry name" value="CYTOCHROME_B559"/>
    <property type="match status" value="1"/>
</dbReference>
<keyword id="KW-0150">Chloroplast</keyword>
<keyword id="KW-0249">Electron transport</keyword>
<keyword id="KW-0349">Heme</keyword>
<keyword id="KW-0408">Iron</keyword>
<keyword id="KW-0472">Membrane</keyword>
<keyword id="KW-0479">Metal-binding</keyword>
<keyword id="KW-0602">Photosynthesis</keyword>
<keyword id="KW-0604">Photosystem II</keyword>
<keyword id="KW-0934">Plastid</keyword>
<keyword id="KW-0793">Thylakoid</keyword>
<keyword id="KW-0812">Transmembrane</keyword>
<keyword id="KW-1133">Transmembrane helix</keyword>
<keyword id="KW-0813">Transport</keyword>
<accession>Q0G9U6</accession>